<feature type="chain" id="PRO_0000346872" description="Putative uncharacterized protein DDB_G0291786">
    <location>
        <begin position="1"/>
        <end position="183"/>
    </location>
</feature>
<feature type="region of interest" description="Disordered" evidence="1">
    <location>
        <begin position="105"/>
        <end position="151"/>
    </location>
</feature>
<feature type="compositionally biased region" description="Low complexity" evidence="1">
    <location>
        <begin position="105"/>
        <end position="149"/>
    </location>
</feature>
<reference key="1">
    <citation type="journal article" date="2005" name="Nature">
        <title>The genome of the social amoeba Dictyostelium discoideum.</title>
        <authorList>
            <person name="Eichinger L."/>
            <person name="Pachebat J.A."/>
            <person name="Gloeckner G."/>
            <person name="Rajandream M.A."/>
            <person name="Sucgang R."/>
            <person name="Berriman M."/>
            <person name="Song J."/>
            <person name="Olsen R."/>
            <person name="Szafranski K."/>
            <person name="Xu Q."/>
            <person name="Tunggal B."/>
            <person name="Kummerfeld S."/>
            <person name="Madera M."/>
            <person name="Konfortov B.A."/>
            <person name="Rivero F."/>
            <person name="Bankier A.T."/>
            <person name="Lehmann R."/>
            <person name="Hamlin N."/>
            <person name="Davies R."/>
            <person name="Gaudet P."/>
            <person name="Fey P."/>
            <person name="Pilcher K."/>
            <person name="Chen G."/>
            <person name="Saunders D."/>
            <person name="Sodergren E.J."/>
            <person name="Davis P."/>
            <person name="Kerhornou A."/>
            <person name="Nie X."/>
            <person name="Hall N."/>
            <person name="Anjard C."/>
            <person name="Hemphill L."/>
            <person name="Bason N."/>
            <person name="Farbrother P."/>
            <person name="Desany B."/>
            <person name="Just E."/>
            <person name="Morio T."/>
            <person name="Rost R."/>
            <person name="Churcher C.M."/>
            <person name="Cooper J."/>
            <person name="Haydock S."/>
            <person name="van Driessche N."/>
            <person name="Cronin A."/>
            <person name="Goodhead I."/>
            <person name="Muzny D.M."/>
            <person name="Mourier T."/>
            <person name="Pain A."/>
            <person name="Lu M."/>
            <person name="Harper D."/>
            <person name="Lindsay R."/>
            <person name="Hauser H."/>
            <person name="James K.D."/>
            <person name="Quiles M."/>
            <person name="Madan Babu M."/>
            <person name="Saito T."/>
            <person name="Buchrieser C."/>
            <person name="Wardroper A."/>
            <person name="Felder M."/>
            <person name="Thangavelu M."/>
            <person name="Johnson D."/>
            <person name="Knights A."/>
            <person name="Loulseged H."/>
            <person name="Mungall K.L."/>
            <person name="Oliver K."/>
            <person name="Price C."/>
            <person name="Quail M.A."/>
            <person name="Urushihara H."/>
            <person name="Hernandez J."/>
            <person name="Rabbinowitsch E."/>
            <person name="Steffen D."/>
            <person name="Sanders M."/>
            <person name="Ma J."/>
            <person name="Kohara Y."/>
            <person name="Sharp S."/>
            <person name="Simmonds M.N."/>
            <person name="Spiegler S."/>
            <person name="Tivey A."/>
            <person name="Sugano S."/>
            <person name="White B."/>
            <person name="Walker D."/>
            <person name="Woodward J.R."/>
            <person name="Winckler T."/>
            <person name="Tanaka Y."/>
            <person name="Shaulsky G."/>
            <person name="Schleicher M."/>
            <person name="Weinstock G.M."/>
            <person name="Rosenthal A."/>
            <person name="Cox E.C."/>
            <person name="Chisholm R.L."/>
            <person name="Gibbs R.A."/>
            <person name="Loomis W.F."/>
            <person name="Platzer M."/>
            <person name="Kay R.R."/>
            <person name="Williams J.G."/>
            <person name="Dear P.H."/>
            <person name="Noegel A.A."/>
            <person name="Barrell B.G."/>
            <person name="Kuspa A."/>
        </authorList>
    </citation>
    <scope>NUCLEOTIDE SEQUENCE [LARGE SCALE GENOMIC DNA]</scope>
    <source>
        <strain>AX4</strain>
    </source>
</reference>
<protein>
    <recommendedName>
        <fullName>Putative uncharacterized protein DDB_G0291786</fullName>
    </recommendedName>
</protein>
<name>Y9694_DICDI</name>
<accession>Q54E63</accession>
<proteinExistence type="predicted"/>
<gene>
    <name type="ORF">DDB_G0291786</name>
</gene>
<keyword id="KW-1185">Reference proteome</keyword>
<dbReference type="EMBL" id="AAFI02000184">
    <property type="protein sequence ID" value="EAL61552.1"/>
    <property type="molecule type" value="Genomic_DNA"/>
</dbReference>
<dbReference type="RefSeq" id="XP_629962.1">
    <property type="nucleotide sequence ID" value="XM_629960.1"/>
</dbReference>
<dbReference type="SMR" id="Q54E63"/>
<dbReference type="FunCoup" id="Q54E63">
    <property type="interactions" value="3"/>
</dbReference>
<dbReference type="PaxDb" id="44689-DDB0219694"/>
<dbReference type="EnsemblProtists" id="EAL61552">
    <property type="protein sequence ID" value="EAL61552"/>
    <property type="gene ID" value="DDB_G0291786"/>
</dbReference>
<dbReference type="GeneID" id="8628329"/>
<dbReference type="KEGG" id="ddi:DDB_G0291786"/>
<dbReference type="dictyBase" id="DDB_G0291786"/>
<dbReference type="VEuPathDB" id="AmoebaDB:DDB_G0291786"/>
<dbReference type="HOGENOM" id="CLU_1477702_0_0_1"/>
<dbReference type="InParanoid" id="Q54E63"/>
<dbReference type="OMA" id="MENNIYN"/>
<dbReference type="PRO" id="PR:Q54E63"/>
<dbReference type="Proteomes" id="UP000002195">
    <property type="component" value="Chromosome 6"/>
</dbReference>
<organism>
    <name type="scientific">Dictyostelium discoideum</name>
    <name type="common">Social amoeba</name>
    <dbReference type="NCBI Taxonomy" id="44689"/>
    <lineage>
        <taxon>Eukaryota</taxon>
        <taxon>Amoebozoa</taxon>
        <taxon>Evosea</taxon>
        <taxon>Eumycetozoa</taxon>
        <taxon>Dictyostelia</taxon>
        <taxon>Dictyosteliales</taxon>
        <taxon>Dictyosteliaceae</taxon>
        <taxon>Dictyostelium</taxon>
    </lineage>
</organism>
<evidence type="ECO:0000256" key="1">
    <source>
        <dbReference type="SAM" id="MobiDB-lite"/>
    </source>
</evidence>
<sequence>MDNNKKKDFFYFKPSEEIEEEIIDCFMENPVDENMFNQQQQQLQNNHENLEINEEYHQTINEMEDMIFTYSNTNISNDTNLSDNNVSDLIKLEIYNSNNINNNIYNTNNSNTNTNYNNNNNNNNNNNNNNNNNNNKNNNNNNNNNNSNSKIKRRNSIILDNVGTIIRIDTTNISSTKKRRIFK</sequence>